<feature type="chain" id="PRO_1000197528" description="Uroporphyrinogen decarboxylase">
    <location>
        <begin position="1"/>
        <end position="350"/>
    </location>
</feature>
<feature type="binding site" evidence="1">
    <location>
        <begin position="27"/>
        <end position="31"/>
    </location>
    <ligand>
        <name>substrate</name>
    </ligand>
</feature>
<feature type="binding site" evidence="1">
    <location>
        <position position="46"/>
    </location>
    <ligand>
        <name>substrate</name>
    </ligand>
</feature>
<feature type="binding site" evidence="1">
    <location>
        <position position="76"/>
    </location>
    <ligand>
        <name>substrate</name>
    </ligand>
</feature>
<feature type="binding site" evidence="1">
    <location>
        <position position="152"/>
    </location>
    <ligand>
        <name>substrate</name>
    </ligand>
</feature>
<feature type="binding site" evidence="1">
    <location>
        <position position="207"/>
    </location>
    <ligand>
        <name>substrate</name>
    </ligand>
</feature>
<feature type="binding site" evidence="1">
    <location>
        <position position="321"/>
    </location>
    <ligand>
        <name>substrate</name>
    </ligand>
</feature>
<feature type="site" description="Transition state stabilizer" evidence="1">
    <location>
        <position position="76"/>
    </location>
</feature>
<protein>
    <recommendedName>
        <fullName evidence="1">Uroporphyrinogen decarboxylase</fullName>
        <shortName evidence="1">UPD</shortName>
        <shortName evidence="1">URO-D</shortName>
        <ecNumber evidence="1">4.1.1.37</ecNumber>
    </recommendedName>
</protein>
<sequence length="350" mass="39301">MTKITNDLFLKAARKEQVDRIPVWYMRQAGRSQPEYRKLKEKYSLFEITHQPEICAYVTKLPVDQYGVDAAILYKDIMTPLPGMGVDVEIKSGIGPVIHNPIRTFQDVEKLAIFKPEIEVPYVLDTIKLLADDMLDVPLIGFAGAPFTLASYMIEGGPSKNYHQTKSFMYREPEVWAILMEKLGRMTANYLIAQINAGASAVQLFDSWVGALSRADYAKYIRPVIEMIVSEVKAAHPTTPIIMQAVGASHLLAEWETMPLDVVGVDWRETITSAREKVPTKAIQGNLDPSTLLAPAKCLEEAERILQEGVLEPGYIFNLGHGVFPEVPPEMLKKLTNYIHERSEILLKKG</sequence>
<accession>B8DF98</accession>
<proteinExistence type="inferred from homology"/>
<keyword id="KW-0963">Cytoplasm</keyword>
<keyword id="KW-0210">Decarboxylase</keyword>
<keyword id="KW-0456">Lyase</keyword>
<keyword id="KW-0627">Porphyrin biosynthesis</keyword>
<reference key="1">
    <citation type="journal article" date="2011" name="J. Bacteriol.">
        <title>Genome sequence of lineage III Listeria monocytogenes strain HCC23.</title>
        <authorList>
            <person name="Steele C.L."/>
            <person name="Donaldson J.R."/>
            <person name="Paul D."/>
            <person name="Banes M.M."/>
            <person name="Arick T."/>
            <person name="Bridges S.M."/>
            <person name="Lawrence M.L."/>
        </authorList>
    </citation>
    <scope>NUCLEOTIDE SEQUENCE [LARGE SCALE GENOMIC DNA]</scope>
    <source>
        <strain>HCC23</strain>
    </source>
</reference>
<name>DCUP_LISMH</name>
<evidence type="ECO:0000255" key="1">
    <source>
        <dbReference type="HAMAP-Rule" id="MF_00218"/>
    </source>
</evidence>
<dbReference type="EC" id="4.1.1.37" evidence="1"/>
<dbReference type="EMBL" id="CP001175">
    <property type="protein sequence ID" value="ACK38690.1"/>
    <property type="molecule type" value="Genomic_DNA"/>
</dbReference>
<dbReference type="RefSeq" id="WP_012580881.1">
    <property type="nucleotide sequence ID" value="NC_011660.1"/>
</dbReference>
<dbReference type="SMR" id="B8DF98"/>
<dbReference type="KEGG" id="lmh:LMHCC_0330"/>
<dbReference type="HOGENOM" id="CLU_040933_0_1_9"/>
<dbReference type="UniPathway" id="UPA00251">
    <property type="reaction ID" value="UER00321"/>
</dbReference>
<dbReference type="GO" id="GO:0005829">
    <property type="term" value="C:cytosol"/>
    <property type="evidence" value="ECO:0007669"/>
    <property type="project" value="TreeGrafter"/>
</dbReference>
<dbReference type="GO" id="GO:0004853">
    <property type="term" value="F:uroporphyrinogen decarboxylase activity"/>
    <property type="evidence" value="ECO:0007669"/>
    <property type="project" value="UniProtKB-UniRule"/>
</dbReference>
<dbReference type="GO" id="GO:0006782">
    <property type="term" value="P:protoporphyrinogen IX biosynthetic process"/>
    <property type="evidence" value="ECO:0007669"/>
    <property type="project" value="UniProtKB-UniRule"/>
</dbReference>
<dbReference type="CDD" id="cd00717">
    <property type="entry name" value="URO-D"/>
    <property type="match status" value="1"/>
</dbReference>
<dbReference type="FunFam" id="3.20.20.210:FF:000005">
    <property type="entry name" value="Uroporphyrinogen decarboxylase"/>
    <property type="match status" value="1"/>
</dbReference>
<dbReference type="Gene3D" id="3.20.20.210">
    <property type="match status" value="1"/>
</dbReference>
<dbReference type="HAMAP" id="MF_00218">
    <property type="entry name" value="URO_D"/>
    <property type="match status" value="1"/>
</dbReference>
<dbReference type="InterPro" id="IPR038071">
    <property type="entry name" value="UROD/MetE-like_sf"/>
</dbReference>
<dbReference type="InterPro" id="IPR006361">
    <property type="entry name" value="Uroporphyrinogen_deCO2ase_HemE"/>
</dbReference>
<dbReference type="InterPro" id="IPR000257">
    <property type="entry name" value="Uroporphyrinogen_deCOase"/>
</dbReference>
<dbReference type="NCBIfam" id="TIGR01464">
    <property type="entry name" value="hemE"/>
    <property type="match status" value="1"/>
</dbReference>
<dbReference type="PANTHER" id="PTHR21091">
    <property type="entry name" value="METHYLTETRAHYDROFOLATE:HOMOCYSTEINE METHYLTRANSFERASE RELATED"/>
    <property type="match status" value="1"/>
</dbReference>
<dbReference type="PANTHER" id="PTHR21091:SF169">
    <property type="entry name" value="UROPORPHYRINOGEN DECARBOXYLASE"/>
    <property type="match status" value="1"/>
</dbReference>
<dbReference type="Pfam" id="PF01208">
    <property type="entry name" value="URO-D"/>
    <property type="match status" value="1"/>
</dbReference>
<dbReference type="SUPFAM" id="SSF51726">
    <property type="entry name" value="UROD/MetE-like"/>
    <property type="match status" value="1"/>
</dbReference>
<dbReference type="PROSITE" id="PS00906">
    <property type="entry name" value="UROD_1"/>
    <property type="match status" value="1"/>
</dbReference>
<dbReference type="PROSITE" id="PS00907">
    <property type="entry name" value="UROD_2"/>
    <property type="match status" value="1"/>
</dbReference>
<organism>
    <name type="scientific">Listeria monocytogenes serotype 4a (strain HCC23)</name>
    <dbReference type="NCBI Taxonomy" id="552536"/>
    <lineage>
        <taxon>Bacteria</taxon>
        <taxon>Bacillati</taxon>
        <taxon>Bacillota</taxon>
        <taxon>Bacilli</taxon>
        <taxon>Bacillales</taxon>
        <taxon>Listeriaceae</taxon>
        <taxon>Listeria</taxon>
    </lineage>
</organism>
<comment type="function">
    <text evidence="1">Catalyzes the decarboxylation of four acetate groups of uroporphyrinogen-III to yield coproporphyrinogen-III.</text>
</comment>
<comment type="catalytic activity">
    <reaction evidence="1">
        <text>uroporphyrinogen III + 4 H(+) = coproporphyrinogen III + 4 CO2</text>
        <dbReference type="Rhea" id="RHEA:19865"/>
        <dbReference type="ChEBI" id="CHEBI:15378"/>
        <dbReference type="ChEBI" id="CHEBI:16526"/>
        <dbReference type="ChEBI" id="CHEBI:57308"/>
        <dbReference type="ChEBI" id="CHEBI:57309"/>
        <dbReference type="EC" id="4.1.1.37"/>
    </reaction>
</comment>
<comment type="pathway">
    <text evidence="1">Porphyrin-containing compound metabolism; protoporphyrin-IX biosynthesis; coproporphyrinogen-III from 5-aminolevulinate: step 4/4.</text>
</comment>
<comment type="subunit">
    <text evidence="1">Homodimer.</text>
</comment>
<comment type="subcellular location">
    <subcellularLocation>
        <location evidence="1">Cytoplasm</location>
    </subcellularLocation>
</comment>
<comment type="similarity">
    <text evidence="1">Belongs to the uroporphyrinogen decarboxylase family.</text>
</comment>
<gene>
    <name evidence="1" type="primary">hemE</name>
    <name type="ordered locus">LMHCC_0330</name>
</gene>